<reference key="1">
    <citation type="journal article" date="2002" name="Proc. Natl. Acad. Sci. U.S.A.">
        <title>Genome sequence and comparative microarray analysis of serotype M18 group A Streptococcus strains associated with acute rheumatic fever outbreaks.</title>
        <authorList>
            <person name="Smoot J.C."/>
            <person name="Barbian K.D."/>
            <person name="Van Gompel J.J."/>
            <person name="Smoot L.M."/>
            <person name="Chaussee M.S."/>
            <person name="Sylva G.L."/>
            <person name="Sturdevant D.E."/>
            <person name="Ricklefs S.M."/>
            <person name="Porcella S.F."/>
            <person name="Parkins L.D."/>
            <person name="Beres S.B."/>
            <person name="Campbell D.S."/>
            <person name="Smith T.M."/>
            <person name="Zhang Q."/>
            <person name="Kapur V."/>
            <person name="Daly J.A."/>
            <person name="Veasy L.G."/>
            <person name="Musser J.M."/>
        </authorList>
    </citation>
    <scope>NUCLEOTIDE SEQUENCE [LARGE SCALE GENOMIC DNA]</scope>
    <source>
        <strain>MGAS8232</strain>
    </source>
</reference>
<name>KTHY_STRP8</name>
<organism>
    <name type="scientific">Streptococcus pyogenes serotype M18 (strain MGAS8232)</name>
    <dbReference type="NCBI Taxonomy" id="186103"/>
    <lineage>
        <taxon>Bacteria</taxon>
        <taxon>Bacillati</taxon>
        <taxon>Bacillota</taxon>
        <taxon>Bacilli</taxon>
        <taxon>Lactobacillales</taxon>
        <taxon>Streptococcaceae</taxon>
        <taxon>Streptococcus</taxon>
    </lineage>
</organism>
<protein>
    <recommendedName>
        <fullName evidence="1">Thymidylate kinase</fullName>
        <ecNumber evidence="1">2.7.4.9</ecNumber>
    </recommendedName>
    <alternativeName>
        <fullName evidence="1">dTMP kinase</fullName>
    </alternativeName>
</protein>
<keyword id="KW-0067">ATP-binding</keyword>
<keyword id="KW-0418">Kinase</keyword>
<keyword id="KW-0545">Nucleotide biosynthesis</keyword>
<keyword id="KW-0547">Nucleotide-binding</keyword>
<keyword id="KW-0808">Transferase</keyword>
<gene>
    <name evidence="1" type="primary">tmk</name>
    <name type="synonym">tdk</name>
    <name type="ordered locus">spyM18_0449</name>
</gene>
<dbReference type="EC" id="2.7.4.9" evidence="1"/>
<dbReference type="EMBL" id="AE009949">
    <property type="protein sequence ID" value="AAL97184.1"/>
    <property type="molecule type" value="Genomic_DNA"/>
</dbReference>
<dbReference type="RefSeq" id="WP_011017420.1">
    <property type="nucleotide sequence ID" value="NC_003485.1"/>
</dbReference>
<dbReference type="SMR" id="Q8P2B1"/>
<dbReference type="KEGG" id="spm:spyM18_0449"/>
<dbReference type="HOGENOM" id="CLU_049131_0_2_9"/>
<dbReference type="GO" id="GO:0005829">
    <property type="term" value="C:cytosol"/>
    <property type="evidence" value="ECO:0007669"/>
    <property type="project" value="TreeGrafter"/>
</dbReference>
<dbReference type="GO" id="GO:0005524">
    <property type="term" value="F:ATP binding"/>
    <property type="evidence" value="ECO:0007669"/>
    <property type="project" value="UniProtKB-UniRule"/>
</dbReference>
<dbReference type="GO" id="GO:0004798">
    <property type="term" value="F:dTMP kinase activity"/>
    <property type="evidence" value="ECO:0007669"/>
    <property type="project" value="UniProtKB-UniRule"/>
</dbReference>
<dbReference type="GO" id="GO:0006233">
    <property type="term" value="P:dTDP biosynthetic process"/>
    <property type="evidence" value="ECO:0007669"/>
    <property type="project" value="InterPro"/>
</dbReference>
<dbReference type="GO" id="GO:0006235">
    <property type="term" value="P:dTTP biosynthetic process"/>
    <property type="evidence" value="ECO:0007669"/>
    <property type="project" value="UniProtKB-UniRule"/>
</dbReference>
<dbReference type="GO" id="GO:0006227">
    <property type="term" value="P:dUDP biosynthetic process"/>
    <property type="evidence" value="ECO:0007669"/>
    <property type="project" value="TreeGrafter"/>
</dbReference>
<dbReference type="CDD" id="cd01672">
    <property type="entry name" value="TMPK"/>
    <property type="match status" value="1"/>
</dbReference>
<dbReference type="FunFam" id="3.40.50.300:FF:000225">
    <property type="entry name" value="Thymidylate kinase"/>
    <property type="match status" value="1"/>
</dbReference>
<dbReference type="Gene3D" id="3.40.50.300">
    <property type="entry name" value="P-loop containing nucleotide triphosphate hydrolases"/>
    <property type="match status" value="1"/>
</dbReference>
<dbReference type="HAMAP" id="MF_00165">
    <property type="entry name" value="Thymidylate_kinase"/>
    <property type="match status" value="1"/>
</dbReference>
<dbReference type="InterPro" id="IPR027417">
    <property type="entry name" value="P-loop_NTPase"/>
</dbReference>
<dbReference type="InterPro" id="IPR039430">
    <property type="entry name" value="Thymidylate_kin-like_dom"/>
</dbReference>
<dbReference type="InterPro" id="IPR018094">
    <property type="entry name" value="Thymidylate_kinase"/>
</dbReference>
<dbReference type="NCBIfam" id="TIGR00041">
    <property type="entry name" value="DTMP_kinase"/>
    <property type="match status" value="1"/>
</dbReference>
<dbReference type="PANTHER" id="PTHR10344">
    <property type="entry name" value="THYMIDYLATE KINASE"/>
    <property type="match status" value="1"/>
</dbReference>
<dbReference type="PANTHER" id="PTHR10344:SF4">
    <property type="entry name" value="UMP-CMP KINASE 2, MITOCHONDRIAL"/>
    <property type="match status" value="1"/>
</dbReference>
<dbReference type="Pfam" id="PF02223">
    <property type="entry name" value="Thymidylate_kin"/>
    <property type="match status" value="1"/>
</dbReference>
<dbReference type="SUPFAM" id="SSF52540">
    <property type="entry name" value="P-loop containing nucleoside triphosphate hydrolases"/>
    <property type="match status" value="1"/>
</dbReference>
<proteinExistence type="inferred from homology"/>
<comment type="function">
    <text evidence="1">Phosphorylation of dTMP to form dTDP in both de novo and salvage pathways of dTTP synthesis.</text>
</comment>
<comment type="catalytic activity">
    <reaction evidence="1">
        <text>dTMP + ATP = dTDP + ADP</text>
        <dbReference type="Rhea" id="RHEA:13517"/>
        <dbReference type="ChEBI" id="CHEBI:30616"/>
        <dbReference type="ChEBI" id="CHEBI:58369"/>
        <dbReference type="ChEBI" id="CHEBI:63528"/>
        <dbReference type="ChEBI" id="CHEBI:456216"/>
        <dbReference type="EC" id="2.7.4.9"/>
    </reaction>
</comment>
<comment type="similarity">
    <text evidence="1">Belongs to the thymidylate kinase family.</text>
</comment>
<evidence type="ECO:0000255" key="1">
    <source>
        <dbReference type="HAMAP-Rule" id="MF_00165"/>
    </source>
</evidence>
<accession>Q8P2B1</accession>
<feature type="chain" id="PRO_0000155354" description="Thymidylate kinase">
    <location>
        <begin position="1"/>
        <end position="211"/>
    </location>
</feature>
<feature type="binding site" evidence="1">
    <location>
        <begin position="11"/>
        <end position="18"/>
    </location>
    <ligand>
        <name>ATP</name>
        <dbReference type="ChEBI" id="CHEBI:30616"/>
    </ligand>
</feature>
<sequence length="211" mass="23456">MITGKLITVEGPDGAGKTTVLEQLIPPLKQKVAQEILTTREPGGVAISEYIRELILDINHTTMDPKTELLLYIAARRQHLVEKVLPALEAGQLVFIDRFIDSSVAYQGAGRGLIKADIQWLNEFATDGLEPDLTLYFDVPSEIGLARINANQQREVNRLDLETIEIHQRVRKGYLALAKEHPKRIVTIDATKPLKEVVSVALEHVLALLLA</sequence>